<sequence>MFNSVNLGNFCSPSRKERGADFGERGSCASNLYLPSCTYYMPEFSTVSSFLPQAPSRQISYPYSAQVPPVREVSYGLEPSGKWHHRNSYSSCYAAADELMHRECLPPSTVTEILMKNEGSYGGHHHPSAPHATPAGFYSSVNKNSVLPQAFDRFFDNAYCGGGDPPAEPPCSGKGEAKGEPEAPPASGLASRAEAGAEAEAEEENTNPSSSGSAHSVAKEPAKGAAPNAPRTRKKRCPYSKFQIRELEREFFFNVYINKEKRLQLSRMLNLTDRQVKIWFQNRRMKEKKLSRDRLQYFSGNPLL</sequence>
<organism>
    <name type="scientific">Homo sapiens</name>
    <name type="common">Human</name>
    <dbReference type="NCBI Taxonomy" id="9606"/>
    <lineage>
        <taxon>Eukaryota</taxon>
        <taxon>Metazoa</taxon>
        <taxon>Chordata</taxon>
        <taxon>Craniata</taxon>
        <taxon>Vertebrata</taxon>
        <taxon>Euteleostomi</taxon>
        <taxon>Mammalia</taxon>
        <taxon>Eutheria</taxon>
        <taxon>Euarchontoglires</taxon>
        <taxon>Primates</taxon>
        <taxon>Haplorrhini</taxon>
        <taxon>Catarrhini</taxon>
        <taxon>Hominidae</taxon>
        <taxon>Homo</taxon>
    </lineage>
</organism>
<reference key="1">
    <citation type="journal article" date="1998" name="J. Biol. Chem.">
        <title>The HOXC11 homeodomain protein interacts with the lactase-phlorizin hydrolase promoter and stimulates HNF1alpha-dependent transcription.</title>
        <authorList>
            <person name="Mitchelmore C.E."/>
            <person name="Troelsen J.T."/>
            <person name="Sjoestroem H."/>
            <person name="Noren O."/>
        </authorList>
    </citation>
    <scope>NUCLEOTIDE SEQUENCE [MRNA]</scope>
</reference>
<reference key="2">
    <citation type="journal article" date="2004" name="Nat. Genet.">
        <title>Complete sequencing and characterization of 21,243 full-length human cDNAs.</title>
        <authorList>
            <person name="Ota T."/>
            <person name="Suzuki Y."/>
            <person name="Nishikawa T."/>
            <person name="Otsuki T."/>
            <person name="Sugiyama T."/>
            <person name="Irie R."/>
            <person name="Wakamatsu A."/>
            <person name="Hayashi K."/>
            <person name="Sato H."/>
            <person name="Nagai K."/>
            <person name="Kimura K."/>
            <person name="Makita H."/>
            <person name="Sekine M."/>
            <person name="Obayashi M."/>
            <person name="Nishi T."/>
            <person name="Shibahara T."/>
            <person name="Tanaka T."/>
            <person name="Ishii S."/>
            <person name="Yamamoto J."/>
            <person name="Saito K."/>
            <person name="Kawai Y."/>
            <person name="Isono Y."/>
            <person name="Nakamura Y."/>
            <person name="Nagahari K."/>
            <person name="Murakami K."/>
            <person name="Yasuda T."/>
            <person name="Iwayanagi T."/>
            <person name="Wagatsuma M."/>
            <person name="Shiratori A."/>
            <person name="Sudo H."/>
            <person name="Hosoiri T."/>
            <person name="Kaku Y."/>
            <person name="Kodaira H."/>
            <person name="Kondo H."/>
            <person name="Sugawara M."/>
            <person name="Takahashi M."/>
            <person name="Kanda K."/>
            <person name="Yokoi T."/>
            <person name="Furuya T."/>
            <person name="Kikkawa E."/>
            <person name="Omura Y."/>
            <person name="Abe K."/>
            <person name="Kamihara K."/>
            <person name="Katsuta N."/>
            <person name="Sato K."/>
            <person name="Tanikawa M."/>
            <person name="Yamazaki M."/>
            <person name="Ninomiya K."/>
            <person name="Ishibashi T."/>
            <person name="Yamashita H."/>
            <person name="Murakawa K."/>
            <person name="Fujimori K."/>
            <person name="Tanai H."/>
            <person name="Kimata M."/>
            <person name="Watanabe M."/>
            <person name="Hiraoka S."/>
            <person name="Chiba Y."/>
            <person name="Ishida S."/>
            <person name="Ono Y."/>
            <person name="Takiguchi S."/>
            <person name="Watanabe S."/>
            <person name="Yosida M."/>
            <person name="Hotuta T."/>
            <person name="Kusano J."/>
            <person name="Kanehori K."/>
            <person name="Takahashi-Fujii A."/>
            <person name="Hara H."/>
            <person name="Tanase T.-O."/>
            <person name="Nomura Y."/>
            <person name="Togiya S."/>
            <person name="Komai F."/>
            <person name="Hara R."/>
            <person name="Takeuchi K."/>
            <person name="Arita M."/>
            <person name="Imose N."/>
            <person name="Musashino K."/>
            <person name="Yuuki H."/>
            <person name="Oshima A."/>
            <person name="Sasaki N."/>
            <person name="Aotsuka S."/>
            <person name="Yoshikawa Y."/>
            <person name="Matsunawa H."/>
            <person name="Ichihara T."/>
            <person name="Shiohata N."/>
            <person name="Sano S."/>
            <person name="Moriya S."/>
            <person name="Momiyama H."/>
            <person name="Satoh N."/>
            <person name="Takami S."/>
            <person name="Terashima Y."/>
            <person name="Suzuki O."/>
            <person name="Nakagawa S."/>
            <person name="Senoh A."/>
            <person name="Mizoguchi H."/>
            <person name="Goto Y."/>
            <person name="Shimizu F."/>
            <person name="Wakebe H."/>
            <person name="Hishigaki H."/>
            <person name="Watanabe T."/>
            <person name="Sugiyama A."/>
            <person name="Takemoto M."/>
            <person name="Kawakami B."/>
            <person name="Yamazaki M."/>
            <person name="Watanabe K."/>
            <person name="Kumagai A."/>
            <person name="Itakura S."/>
            <person name="Fukuzumi Y."/>
            <person name="Fujimori Y."/>
            <person name="Komiyama M."/>
            <person name="Tashiro H."/>
            <person name="Tanigami A."/>
            <person name="Fujiwara T."/>
            <person name="Ono T."/>
            <person name="Yamada K."/>
            <person name="Fujii Y."/>
            <person name="Ozaki K."/>
            <person name="Hirao M."/>
            <person name="Ohmori Y."/>
            <person name="Kawabata A."/>
            <person name="Hikiji T."/>
            <person name="Kobatake N."/>
            <person name="Inagaki H."/>
            <person name="Ikema Y."/>
            <person name="Okamoto S."/>
            <person name="Okitani R."/>
            <person name="Kawakami T."/>
            <person name="Noguchi S."/>
            <person name="Itoh T."/>
            <person name="Shigeta K."/>
            <person name="Senba T."/>
            <person name="Matsumura K."/>
            <person name="Nakajima Y."/>
            <person name="Mizuno T."/>
            <person name="Morinaga M."/>
            <person name="Sasaki M."/>
            <person name="Togashi T."/>
            <person name="Oyama M."/>
            <person name="Hata H."/>
            <person name="Watanabe M."/>
            <person name="Komatsu T."/>
            <person name="Mizushima-Sugano J."/>
            <person name="Satoh T."/>
            <person name="Shirai Y."/>
            <person name="Takahashi Y."/>
            <person name="Nakagawa K."/>
            <person name="Okumura K."/>
            <person name="Nagase T."/>
            <person name="Nomura N."/>
            <person name="Kikuchi H."/>
            <person name="Masuho Y."/>
            <person name="Yamashita R."/>
            <person name="Nakai K."/>
            <person name="Yada T."/>
            <person name="Nakamura Y."/>
            <person name="Ohara O."/>
            <person name="Isogai T."/>
            <person name="Sugano S."/>
        </authorList>
    </citation>
    <scope>NUCLEOTIDE SEQUENCE [LARGE SCALE MRNA]</scope>
</reference>
<reference key="3">
    <citation type="submission" date="2005-07" db="EMBL/GenBank/DDBJ databases">
        <authorList>
            <person name="Mural R.J."/>
            <person name="Istrail S."/>
            <person name="Sutton G.G."/>
            <person name="Florea L."/>
            <person name="Halpern A.L."/>
            <person name="Mobarry C.M."/>
            <person name="Lippert R."/>
            <person name="Walenz B."/>
            <person name="Shatkay H."/>
            <person name="Dew I."/>
            <person name="Miller J.R."/>
            <person name="Flanigan M.J."/>
            <person name="Edwards N.J."/>
            <person name="Bolanos R."/>
            <person name="Fasulo D."/>
            <person name="Halldorsson B.V."/>
            <person name="Hannenhalli S."/>
            <person name="Turner R."/>
            <person name="Yooseph S."/>
            <person name="Lu F."/>
            <person name="Nusskern D.R."/>
            <person name="Shue B.C."/>
            <person name="Zheng X.H."/>
            <person name="Zhong F."/>
            <person name="Delcher A.L."/>
            <person name="Huson D.H."/>
            <person name="Kravitz S.A."/>
            <person name="Mouchard L."/>
            <person name="Reinert K."/>
            <person name="Remington K.A."/>
            <person name="Clark A.G."/>
            <person name="Waterman M.S."/>
            <person name="Eichler E.E."/>
            <person name="Adams M.D."/>
            <person name="Hunkapiller M.W."/>
            <person name="Myers E.W."/>
            <person name="Venter J.C."/>
        </authorList>
    </citation>
    <scope>NUCLEOTIDE SEQUENCE [LARGE SCALE GENOMIC DNA]</scope>
</reference>
<reference key="4">
    <citation type="journal article" date="2004" name="Genome Res.">
        <title>The status, quality, and expansion of the NIH full-length cDNA project: the Mammalian Gene Collection (MGC).</title>
        <authorList>
            <consortium name="The MGC Project Team"/>
        </authorList>
    </citation>
    <scope>NUCLEOTIDE SEQUENCE [LARGE SCALE MRNA]</scope>
    <source>
        <tissue>Cervix</tissue>
    </source>
</reference>
<reference key="5">
    <citation type="journal article" date="2014" name="Nat. Struct. Mol. Biol.">
        <title>Uncovering global SUMOylation signaling networks in a site-specific manner.</title>
        <authorList>
            <person name="Hendriks I.A."/>
            <person name="D'Souza R.C."/>
            <person name="Yang B."/>
            <person name="Verlaan-de Vries M."/>
            <person name="Mann M."/>
            <person name="Vertegaal A.C."/>
        </authorList>
    </citation>
    <scope>SUMOYLATION [LARGE SCALE ANALYSIS] AT LYS-178</scope>
    <scope>IDENTIFICATION BY MASS SPECTROMETRY [LARGE SCALE ANALYSIS]</scope>
</reference>
<reference key="6">
    <citation type="journal article" date="2015" name="Cell Rep.">
        <title>SUMO-2 orchestrates chromatin modifiers in response to DNA damage.</title>
        <authorList>
            <person name="Hendriks I.A."/>
            <person name="Treffers L.W."/>
            <person name="Verlaan-de Vries M."/>
            <person name="Olsen J.V."/>
            <person name="Vertegaal A.C."/>
        </authorList>
    </citation>
    <scope>SUMOYLATION [LARGE SCALE ANALYSIS] AT LYS-178</scope>
    <scope>IDENTIFICATION BY MASS SPECTROMETRY [LARGE SCALE ANALYSIS]</scope>
</reference>
<reference key="7">
    <citation type="journal article" date="2017" name="Nat. Struct. Mol. Biol.">
        <title>Site-specific mapping of the human SUMO proteome reveals co-modification with phosphorylation.</title>
        <authorList>
            <person name="Hendriks I.A."/>
            <person name="Lyon D."/>
            <person name="Young C."/>
            <person name="Jensen L.J."/>
            <person name="Vertegaal A.C."/>
            <person name="Nielsen M.L."/>
        </authorList>
    </citation>
    <scope>SUMOYLATION [LARGE SCALE ANALYSIS] AT LYS-82; LYS-116 AND LYS-178</scope>
    <scope>IDENTIFICATION BY MASS SPECTROMETRY [LARGE SCALE ANALYSIS]</scope>
</reference>
<reference key="8">
    <citation type="journal article" date="2002" name="Teratology">
        <title>Complete mutation analysis panel of the 39 human HOX genes.</title>
        <authorList>
            <person name="Kosaki K."/>
            <person name="Kosaki R."/>
            <person name="Suzuki T."/>
            <person name="Yoshihashi H."/>
            <person name="Takahashi T."/>
            <person name="Sasaki K."/>
            <person name="Tomita M."/>
            <person name="McGinnis W."/>
            <person name="Matsuo N."/>
        </authorList>
    </citation>
    <scope>VARIANT SER-130</scope>
</reference>
<proteinExistence type="evidence at protein level"/>
<keyword id="KW-0217">Developmental protein</keyword>
<keyword id="KW-0238">DNA-binding</keyword>
<keyword id="KW-0371">Homeobox</keyword>
<keyword id="KW-1017">Isopeptide bond</keyword>
<keyword id="KW-0539">Nucleus</keyword>
<keyword id="KW-1267">Proteomics identification</keyword>
<keyword id="KW-1185">Reference proteome</keyword>
<keyword id="KW-0804">Transcription</keyword>
<keyword id="KW-0805">Transcription regulation</keyword>
<keyword id="KW-0832">Ubl conjugation</keyword>
<comment type="function">
    <text>Sequence-specific transcription factor which is part of a developmental regulatory system that provides cells with specific positional identities on the anterior-posterior axis. Binds to a promoter element of the lactase-phlorizin hydrolase gene.</text>
</comment>
<comment type="interaction">
    <interactant intactId="EBI-2652631">
        <id>O43248</id>
    </interactant>
    <interactant intactId="EBI-348399">
        <id>P22607</id>
        <label>FGFR3</label>
    </interactant>
    <organismsDiffer>false</organismsDiffer>
    <experiments>3</experiments>
</comment>
<comment type="interaction">
    <interactant intactId="EBI-2652631">
        <id>O43248</id>
    </interactant>
    <interactant intactId="EBI-350145">
        <id>P01112</id>
        <label>HRAS</label>
    </interactant>
    <organismsDiffer>false</organismsDiffer>
    <experiments>3</experiments>
</comment>
<comment type="interaction">
    <interactant intactId="EBI-2652631">
        <id>O43248</id>
    </interactant>
    <interactant intactId="EBI-466029">
        <id>P42858</id>
        <label>HTT</label>
    </interactant>
    <organismsDiffer>false</organismsDiffer>
    <experiments>7</experiments>
</comment>
<comment type="interaction">
    <interactant intactId="EBI-2652631">
        <id>O43248</id>
    </interactant>
    <interactant intactId="EBI-50433196">
        <id>A0A6Q8PF08</id>
        <label>PMP22</label>
    </interactant>
    <organismsDiffer>false</organismsDiffer>
    <experiments>3</experiments>
</comment>
<comment type="interaction">
    <interactant intactId="EBI-2652631">
        <id>O43248</id>
    </interactant>
    <interactant intactId="EBI-359352">
        <id>P25786</id>
        <label>PSMA1</label>
    </interactant>
    <organismsDiffer>false</organismsDiffer>
    <experiments>3</experiments>
</comment>
<comment type="interaction">
    <interactant intactId="EBI-2652631">
        <id>O43248</id>
    </interactant>
    <interactant intactId="EBI-6550597">
        <id>Q15642-2</id>
        <label>TRIP10</label>
    </interactant>
    <organismsDiffer>false</organismsDiffer>
    <experiments>3</experiments>
</comment>
<comment type="subcellular location">
    <subcellularLocation>
        <location>Nucleus</location>
    </subcellularLocation>
</comment>
<comment type="similarity">
    <text evidence="4">Belongs to the Abd-B homeobox family.</text>
</comment>
<gene>
    <name type="primary">HOXC11</name>
    <name type="synonym">HOX3H</name>
</gene>
<protein>
    <recommendedName>
        <fullName>Homeobox protein Hox-C11</fullName>
    </recommendedName>
    <alternativeName>
        <fullName>Homeobox protein Hox-3H</fullName>
    </alternativeName>
</protein>
<feature type="chain" id="PRO_0000200192" description="Homeobox protein Hox-C11">
    <location>
        <begin position="1"/>
        <end position="304"/>
    </location>
</feature>
<feature type="DNA-binding region" description="Homeobox" evidence="1">
    <location>
        <begin position="232"/>
        <end position="291"/>
    </location>
</feature>
<feature type="region of interest" description="Disordered" evidence="2">
    <location>
        <begin position="166"/>
        <end position="237"/>
    </location>
</feature>
<feature type="cross-link" description="Glycyl lysine isopeptide (Lys-Gly) (interchain with G-Cter in SUMO2)" evidence="7">
    <location>
        <position position="82"/>
    </location>
</feature>
<feature type="cross-link" description="Glycyl lysine isopeptide (Lys-Gly) (interchain with G-Cter in SUMO2)" evidence="7">
    <location>
        <position position="116"/>
    </location>
</feature>
<feature type="cross-link" description="Glycyl lysine isopeptide (Lys-Gly) (interchain with G-Cter in SUMO2)" evidence="5 6 7">
    <location>
        <position position="178"/>
    </location>
</feature>
<feature type="sequence variant" id="VAR_031850" description="In dbSNP:rs34652380." evidence="3">
    <original>P</original>
    <variation>S</variation>
    <location>
        <position position="130"/>
    </location>
</feature>
<feature type="sequence variant" id="VAR_034002" description="In dbSNP:rs12427129.">
    <original>A</original>
    <variation>V</variation>
    <location>
        <position position="222"/>
    </location>
</feature>
<feature type="sequence conflict" description="In Ref. 4; AAH01543." evidence="4" ref="4">
    <original>S</original>
    <variation>F</variation>
    <location>
        <position position="48"/>
    </location>
</feature>
<accession>O43248</accession>
<accession>A8K7D1</accession>
<accession>Q96DH2</accession>
<dbReference type="EMBL" id="AJ000041">
    <property type="protein sequence ID" value="CAA03876.1"/>
    <property type="molecule type" value="mRNA"/>
</dbReference>
<dbReference type="EMBL" id="AK291946">
    <property type="protein sequence ID" value="BAF84635.1"/>
    <property type="molecule type" value="mRNA"/>
</dbReference>
<dbReference type="EMBL" id="CH471054">
    <property type="protein sequence ID" value="EAW96736.1"/>
    <property type="molecule type" value="Genomic_DNA"/>
</dbReference>
<dbReference type="EMBL" id="BC001543">
    <property type="protein sequence ID" value="AAH01543.1"/>
    <property type="molecule type" value="mRNA"/>
</dbReference>
<dbReference type="CCDS" id="CCDS8867.1"/>
<dbReference type="PIR" id="A60941">
    <property type="entry name" value="A60941"/>
</dbReference>
<dbReference type="RefSeq" id="NP_055027.1">
    <property type="nucleotide sequence ID" value="NM_014212.4"/>
</dbReference>
<dbReference type="SMR" id="O43248"/>
<dbReference type="BioGRID" id="109467">
    <property type="interactions" value="22"/>
</dbReference>
<dbReference type="FunCoup" id="O43248">
    <property type="interactions" value="845"/>
</dbReference>
<dbReference type="IntAct" id="O43248">
    <property type="interactions" value="21"/>
</dbReference>
<dbReference type="STRING" id="9606.ENSP00000446680"/>
<dbReference type="GlyGen" id="O43248">
    <property type="glycosylation" value="1 site"/>
</dbReference>
<dbReference type="iPTMnet" id="O43248"/>
<dbReference type="PhosphoSitePlus" id="O43248"/>
<dbReference type="BioMuta" id="HOXC11"/>
<dbReference type="jPOST" id="O43248"/>
<dbReference type="MassIVE" id="O43248"/>
<dbReference type="PaxDb" id="9606-ENSP00000446680"/>
<dbReference type="PeptideAtlas" id="O43248"/>
<dbReference type="ProteomicsDB" id="48826"/>
<dbReference type="Pumba" id="O43248"/>
<dbReference type="Antibodypedia" id="15309">
    <property type="antibodies" value="322 antibodies from 28 providers"/>
</dbReference>
<dbReference type="DNASU" id="3227"/>
<dbReference type="Ensembl" id="ENST00000546378.1">
    <property type="protein sequence ID" value="ENSP00000446680.1"/>
    <property type="gene ID" value="ENSG00000123388.4"/>
</dbReference>
<dbReference type="GeneID" id="3227"/>
<dbReference type="KEGG" id="hsa:3227"/>
<dbReference type="MANE-Select" id="ENST00000546378.1">
    <property type="protein sequence ID" value="ENSP00000446680.1"/>
    <property type="RefSeq nucleotide sequence ID" value="NM_014212.4"/>
    <property type="RefSeq protein sequence ID" value="NP_055027.1"/>
</dbReference>
<dbReference type="UCSC" id="uc058oto.1">
    <property type="organism name" value="human"/>
</dbReference>
<dbReference type="AGR" id="HGNC:5123"/>
<dbReference type="CTD" id="3227"/>
<dbReference type="DisGeNET" id="3227"/>
<dbReference type="GeneCards" id="HOXC11"/>
<dbReference type="HGNC" id="HGNC:5123">
    <property type="gene designation" value="HOXC11"/>
</dbReference>
<dbReference type="HPA" id="ENSG00000123388">
    <property type="expression patterns" value="Tissue enhanced (skeletal muscle, skin)"/>
</dbReference>
<dbReference type="MIM" id="605559">
    <property type="type" value="gene"/>
</dbReference>
<dbReference type="neXtProt" id="NX_O43248"/>
<dbReference type="OpenTargets" id="ENSG00000123388"/>
<dbReference type="PharmGKB" id="PA29398"/>
<dbReference type="VEuPathDB" id="HostDB:ENSG00000123388"/>
<dbReference type="eggNOG" id="KOG0487">
    <property type="taxonomic scope" value="Eukaryota"/>
</dbReference>
<dbReference type="GeneTree" id="ENSGT00940000160009"/>
<dbReference type="HOGENOM" id="CLU_079662_0_0_1"/>
<dbReference type="InParanoid" id="O43248"/>
<dbReference type="OMA" id="NESAYGH"/>
<dbReference type="OrthoDB" id="6159439at2759"/>
<dbReference type="PAN-GO" id="O43248">
    <property type="GO annotations" value="5 GO annotations based on evolutionary models"/>
</dbReference>
<dbReference type="PhylomeDB" id="O43248"/>
<dbReference type="TreeFam" id="TF350668"/>
<dbReference type="PathwayCommons" id="O43248"/>
<dbReference type="Reactome" id="R-HSA-9830674">
    <property type="pathway name" value="Formation of the ureteric bud"/>
</dbReference>
<dbReference type="SignaLink" id="O43248"/>
<dbReference type="SIGNOR" id="O43248"/>
<dbReference type="BioGRID-ORCS" id="3227">
    <property type="hits" value="18 hits in 1170 CRISPR screens"/>
</dbReference>
<dbReference type="ChiTaRS" id="HOXC11">
    <property type="organism name" value="human"/>
</dbReference>
<dbReference type="GeneWiki" id="HOXC11"/>
<dbReference type="GenomeRNAi" id="3227"/>
<dbReference type="Pharos" id="O43248">
    <property type="development level" value="Tbio"/>
</dbReference>
<dbReference type="PRO" id="PR:O43248"/>
<dbReference type="Proteomes" id="UP000005640">
    <property type="component" value="Chromosome 12"/>
</dbReference>
<dbReference type="RNAct" id="O43248">
    <property type="molecule type" value="protein"/>
</dbReference>
<dbReference type="Bgee" id="ENSG00000123388">
    <property type="expression patterns" value="Expressed in male germ line stem cell (sensu Vertebrata) in testis and 49 other cell types or tissues"/>
</dbReference>
<dbReference type="ExpressionAtlas" id="O43248">
    <property type="expression patterns" value="baseline and differential"/>
</dbReference>
<dbReference type="GO" id="GO:0000785">
    <property type="term" value="C:chromatin"/>
    <property type="evidence" value="ECO:0000247"/>
    <property type="project" value="NTNU_SB"/>
</dbReference>
<dbReference type="GO" id="GO:0005829">
    <property type="term" value="C:cytosol"/>
    <property type="evidence" value="ECO:0000314"/>
    <property type="project" value="HPA"/>
</dbReference>
<dbReference type="GO" id="GO:0005654">
    <property type="term" value="C:nucleoplasm"/>
    <property type="evidence" value="ECO:0000314"/>
    <property type="project" value="HPA"/>
</dbReference>
<dbReference type="GO" id="GO:0005634">
    <property type="term" value="C:nucleus"/>
    <property type="evidence" value="ECO:0000318"/>
    <property type="project" value="GO_Central"/>
</dbReference>
<dbReference type="GO" id="GO:0001228">
    <property type="term" value="F:DNA-binding transcription activator activity, RNA polymerase II-specific"/>
    <property type="evidence" value="ECO:0000314"/>
    <property type="project" value="NTNU_SB"/>
</dbReference>
<dbReference type="GO" id="GO:0000981">
    <property type="term" value="F:DNA-binding transcription factor activity, RNA polymerase II-specific"/>
    <property type="evidence" value="ECO:0000247"/>
    <property type="project" value="NTNU_SB"/>
</dbReference>
<dbReference type="GO" id="GO:0000978">
    <property type="term" value="F:RNA polymerase II cis-regulatory region sequence-specific DNA binding"/>
    <property type="evidence" value="ECO:0000314"/>
    <property type="project" value="NTNU_SB"/>
</dbReference>
<dbReference type="GO" id="GO:1990837">
    <property type="term" value="F:sequence-specific double-stranded DNA binding"/>
    <property type="evidence" value="ECO:0000314"/>
    <property type="project" value="ARUK-UCL"/>
</dbReference>
<dbReference type="GO" id="GO:0009952">
    <property type="term" value="P:anterior/posterior pattern specification"/>
    <property type="evidence" value="ECO:0007669"/>
    <property type="project" value="Ensembl"/>
</dbReference>
<dbReference type="GO" id="GO:0042733">
    <property type="term" value="P:embryonic digit morphogenesis"/>
    <property type="evidence" value="ECO:0007669"/>
    <property type="project" value="Ensembl"/>
</dbReference>
<dbReference type="GO" id="GO:0060272">
    <property type="term" value="P:embryonic skeletal joint morphogenesis"/>
    <property type="evidence" value="ECO:0000318"/>
    <property type="project" value="GO_Central"/>
</dbReference>
<dbReference type="GO" id="GO:0007492">
    <property type="term" value="P:endoderm development"/>
    <property type="evidence" value="ECO:0000304"/>
    <property type="project" value="ProtInc"/>
</dbReference>
<dbReference type="GO" id="GO:0001656">
    <property type="term" value="P:metanephros development"/>
    <property type="evidence" value="ECO:0007669"/>
    <property type="project" value="Ensembl"/>
</dbReference>
<dbReference type="GO" id="GO:0001759">
    <property type="term" value="P:organ induction"/>
    <property type="evidence" value="ECO:0007669"/>
    <property type="project" value="Ensembl"/>
</dbReference>
<dbReference type="GO" id="GO:0045944">
    <property type="term" value="P:positive regulation of transcription by RNA polymerase II"/>
    <property type="evidence" value="ECO:0000314"/>
    <property type="project" value="NTNU_SB"/>
</dbReference>
<dbReference type="GO" id="GO:0009954">
    <property type="term" value="P:proximal/distal pattern formation"/>
    <property type="evidence" value="ECO:0007669"/>
    <property type="project" value="Ensembl"/>
</dbReference>
<dbReference type="GO" id="GO:0006357">
    <property type="term" value="P:regulation of transcription by RNA polymerase II"/>
    <property type="evidence" value="ECO:0000318"/>
    <property type="project" value="GO_Central"/>
</dbReference>
<dbReference type="CDD" id="cd00086">
    <property type="entry name" value="homeodomain"/>
    <property type="match status" value="1"/>
</dbReference>
<dbReference type="FunFam" id="1.10.10.60:FF:000166">
    <property type="entry name" value="homeobox protein Hox-C11"/>
    <property type="match status" value="1"/>
</dbReference>
<dbReference type="Gene3D" id="1.10.10.60">
    <property type="entry name" value="Homeodomain-like"/>
    <property type="match status" value="1"/>
</dbReference>
<dbReference type="InterPro" id="IPR021918">
    <property type="entry name" value="DUF3528"/>
</dbReference>
<dbReference type="InterPro" id="IPR001356">
    <property type="entry name" value="HD"/>
</dbReference>
<dbReference type="InterPro" id="IPR020479">
    <property type="entry name" value="HD_metazoa"/>
</dbReference>
<dbReference type="InterPro" id="IPR017970">
    <property type="entry name" value="Homeobox_CS"/>
</dbReference>
<dbReference type="InterPro" id="IPR009057">
    <property type="entry name" value="Homeodomain-like_sf"/>
</dbReference>
<dbReference type="PANTHER" id="PTHR46092">
    <property type="entry name" value="HOMEOBOX PROTEIN HOX-A11-RELATED"/>
    <property type="match status" value="1"/>
</dbReference>
<dbReference type="PANTHER" id="PTHR46092:SF1">
    <property type="entry name" value="HOMEOBOX PROTEIN HOX-C11"/>
    <property type="match status" value="1"/>
</dbReference>
<dbReference type="Pfam" id="PF12045">
    <property type="entry name" value="DUF3528"/>
    <property type="match status" value="1"/>
</dbReference>
<dbReference type="Pfam" id="PF00046">
    <property type="entry name" value="Homeodomain"/>
    <property type="match status" value="1"/>
</dbReference>
<dbReference type="PRINTS" id="PR00024">
    <property type="entry name" value="HOMEOBOX"/>
</dbReference>
<dbReference type="SMART" id="SM00389">
    <property type="entry name" value="HOX"/>
    <property type="match status" value="1"/>
</dbReference>
<dbReference type="SUPFAM" id="SSF46689">
    <property type="entry name" value="Homeodomain-like"/>
    <property type="match status" value="1"/>
</dbReference>
<dbReference type="PROSITE" id="PS00027">
    <property type="entry name" value="HOMEOBOX_1"/>
    <property type="match status" value="1"/>
</dbReference>
<dbReference type="PROSITE" id="PS50071">
    <property type="entry name" value="HOMEOBOX_2"/>
    <property type="match status" value="1"/>
</dbReference>
<evidence type="ECO:0000255" key="1">
    <source>
        <dbReference type="PROSITE-ProRule" id="PRU00108"/>
    </source>
</evidence>
<evidence type="ECO:0000256" key="2">
    <source>
        <dbReference type="SAM" id="MobiDB-lite"/>
    </source>
</evidence>
<evidence type="ECO:0000269" key="3">
    <source>
    </source>
</evidence>
<evidence type="ECO:0000305" key="4"/>
<evidence type="ECO:0007744" key="5">
    <source>
    </source>
</evidence>
<evidence type="ECO:0007744" key="6">
    <source>
    </source>
</evidence>
<evidence type="ECO:0007744" key="7">
    <source>
    </source>
</evidence>
<name>HXC11_HUMAN</name>